<keyword id="KW-0131">Cell cycle</keyword>
<keyword id="KW-0132">Cell division</keyword>
<keyword id="KW-0238">DNA-binding</keyword>
<gene>
    <name evidence="1" type="primary">whiA</name>
    <name type="ordered locus">SGR_5572</name>
</gene>
<organism>
    <name type="scientific">Streptomyces griseus subsp. griseus (strain JCM 4626 / CBS 651.72 / NBRC 13350 / KCC S-0626 / ISP 5235)</name>
    <dbReference type="NCBI Taxonomy" id="455632"/>
    <lineage>
        <taxon>Bacteria</taxon>
        <taxon>Bacillati</taxon>
        <taxon>Actinomycetota</taxon>
        <taxon>Actinomycetes</taxon>
        <taxon>Kitasatosporales</taxon>
        <taxon>Streptomycetaceae</taxon>
        <taxon>Streptomyces</taxon>
    </lineage>
</organism>
<protein>
    <recommendedName>
        <fullName evidence="1">Probable cell division protein WhiA</fullName>
    </recommendedName>
</protein>
<feature type="chain" id="PRO_0000376601" description="Probable cell division protein WhiA">
    <location>
        <begin position="1"/>
        <end position="329"/>
    </location>
</feature>
<feature type="DNA-binding region" description="H-T-H motif" evidence="1">
    <location>
        <begin position="275"/>
        <end position="308"/>
    </location>
</feature>
<evidence type="ECO:0000255" key="1">
    <source>
        <dbReference type="HAMAP-Rule" id="MF_01420"/>
    </source>
</evidence>
<comment type="function">
    <text evidence="1">Involved in cell division and chromosome segregation.</text>
</comment>
<comment type="similarity">
    <text evidence="1">Belongs to the WhiA family.</text>
</comment>
<proteinExistence type="inferred from homology"/>
<accession>B1W0Z1</accession>
<dbReference type="EMBL" id="AP009493">
    <property type="protein sequence ID" value="BAG22401.1"/>
    <property type="molecule type" value="Genomic_DNA"/>
</dbReference>
<dbReference type="RefSeq" id="WP_003969868.1">
    <property type="nucleotide sequence ID" value="NC_010572.1"/>
</dbReference>
<dbReference type="SMR" id="B1W0Z1"/>
<dbReference type="KEGG" id="sgr:SGR_5572"/>
<dbReference type="eggNOG" id="COG1481">
    <property type="taxonomic scope" value="Bacteria"/>
</dbReference>
<dbReference type="HOGENOM" id="CLU_053282_0_0_11"/>
<dbReference type="Proteomes" id="UP000001685">
    <property type="component" value="Chromosome"/>
</dbReference>
<dbReference type="GO" id="GO:0003677">
    <property type="term" value="F:DNA binding"/>
    <property type="evidence" value="ECO:0007669"/>
    <property type="project" value="UniProtKB-UniRule"/>
</dbReference>
<dbReference type="GO" id="GO:0051301">
    <property type="term" value="P:cell division"/>
    <property type="evidence" value="ECO:0007669"/>
    <property type="project" value="UniProtKB-UniRule"/>
</dbReference>
<dbReference type="GO" id="GO:0043937">
    <property type="term" value="P:regulation of sporulation"/>
    <property type="evidence" value="ECO:0007669"/>
    <property type="project" value="InterPro"/>
</dbReference>
<dbReference type="FunFam" id="3.10.28.10:FF:000001">
    <property type="entry name" value="Probable cell division protein WhiA"/>
    <property type="match status" value="1"/>
</dbReference>
<dbReference type="Gene3D" id="3.10.28.10">
    <property type="entry name" value="Homing endonucleases"/>
    <property type="match status" value="1"/>
</dbReference>
<dbReference type="HAMAP" id="MF_01420">
    <property type="entry name" value="HTH_type_WhiA"/>
    <property type="match status" value="1"/>
</dbReference>
<dbReference type="InterPro" id="IPR027434">
    <property type="entry name" value="Homing_endonucl"/>
</dbReference>
<dbReference type="InterPro" id="IPR018478">
    <property type="entry name" value="Sporu_reg_WhiA_N_dom"/>
</dbReference>
<dbReference type="InterPro" id="IPR003802">
    <property type="entry name" value="Sporulation_regulator_WhiA"/>
</dbReference>
<dbReference type="InterPro" id="IPR023054">
    <property type="entry name" value="Sporulation_regulator_WhiA_C"/>
</dbReference>
<dbReference type="InterPro" id="IPR039518">
    <property type="entry name" value="WhiA_LAGLIDADG_dom"/>
</dbReference>
<dbReference type="NCBIfam" id="TIGR00647">
    <property type="entry name" value="DNA_bind_WhiA"/>
    <property type="match status" value="1"/>
</dbReference>
<dbReference type="PANTHER" id="PTHR37307">
    <property type="entry name" value="CELL DIVISION PROTEIN WHIA-RELATED"/>
    <property type="match status" value="1"/>
</dbReference>
<dbReference type="PANTHER" id="PTHR37307:SF1">
    <property type="entry name" value="CELL DIVISION PROTEIN WHIA-RELATED"/>
    <property type="match status" value="1"/>
</dbReference>
<dbReference type="Pfam" id="PF02650">
    <property type="entry name" value="HTH_WhiA"/>
    <property type="match status" value="1"/>
</dbReference>
<dbReference type="Pfam" id="PF14527">
    <property type="entry name" value="LAGLIDADG_WhiA"/>
    <property type="match status" value="1"/>
</dbReference>
<dbReference type="Pfam" id="PF10298">
    <property type="entry name" value="WhiA_N"/>
    <property type="match status" value="1"/>
</dbReference>
<name>WHIA_STRGG</name>
<sequence length="329" mass="34863">MAMTPAVKNEISHLPVTRTCCRKAEVSAILRFAGGLHLVSGRIVIEAELDTGNAARRLKRDILEIFGHSSELIVMAPGGLRRGSRFVVRVVAGGDQLARQTGLVDGRGRPIRGLPPQVVSGATCDAEAAWRGAFLAHGSLTEPGRSSSLEVTCPGPEAALALVGAARRLSIAAKAREVRGVDRVVVRDGDAIGALLTRLGAHDAVLAWEERRMRREVRATANRLANFDDANLRRSARAAVAAGARVGRALEILGEEVPEHLAAAGRLRMEHKQASLEELGALADPPLTKDAVAGRIRRLLAMADKRAQDLGIPGTESTLSEELADGLVG</sequence>
<reference key="1">
    <citation type="journal article" date="2008" name="J. Bacteriol.">
        <title>Genome sequence of the streptomycin-producing microorganism Streptomyces griseus IFO 13350.</title>
        <authorList>
            <person name="Ohnishi Y."/>
            <person name="Ishikawa J."/>
            <person name="Hara H."/>
            <person name="Suzuki H."/>
            <person name="Ikenoya M."/>
            <person name="Ikeda H."/>
            <person name="Yamashita A."/>
            <person name="Hattori M."/>
            <person name="Horinouchi S."/>
        </authorList>
    </citation>
    <scope>NUCLEOTIDE SEQUENCE [LARGE SCALE GENOMIC DNA]</scope>
    <source>
        <strain>JCM 4626 / CBS 651.72 / NBRC 13350 / KCC S-0626 / ISP 5235</strain>
    </source>
</reference>